<organism>
    <name type="scientific">Salmonella derby</name>
    <dbReference type="NCBI Taxonomy" id="28144"/>
    <lineage>
        <taxon>Bacteria</taxon>
        <taxon>Pseudomonadati</taxon>
        <taxon>Pseudomonadota</taxon>
        <taxon>Gammaproteobacteria</taxon>
        <taxon>Enterobacterales</taxon>
        <taxon>Enterobacteriaceae</taxon>
        <taxon>Salmonella</taxon>
    </lineage>
</organism>
<reference key="1">
    <citation type="journal article" date="1994" name="Proc. Natl. Acad. Sci. U.S.A.">
        <title>Recombinational basis of serovar diversity in Salmonella enterica.</title>
        <authorList>
            <person name="Li J."/>
            <person name="Nelson K."/>
            <person name="McWhorter A.C."/>
            <person name="Whittam T.S."/>
            <person name="Selander R.K."/>
        </authorList>
    </citation>
    <scope>NUCLEOTIDE SEQUENCE [GENOMIC DNA]</scope>
    <source>
        <strain>S241</strain>
    </source>
</reference>
<reference key="2">
    <citation type="journal article" date="1993" name="J. Bacteriol.">
        <title>Molecular analyses of the Salmonella g. flagellar antigen complex.</title>
        <authorList>
            <person name="Masten B.J."/>
            <person name="Joys T.M."/>
        </authorList>
    </citation>
    <scope>NUCLEOTIDE SEQUENCE [GENOMIC DNA]</scope>
    <source>
        <strain>ATCC 6960 / NCTC 1720</strain>
    </source>
</reference>
<accession>Q06970</accession>
<comment type="function">
    <text>Flagellin is the subunit protein which polymerizes to form the filaments of bacterial flagella.</text>
</comment>
<comment type="subcellular location">
    <subcellularLocation>
        <location>Secreted</location>
    </subcellularLocation>
    <subcellularLocation>
        <location>Bacterial flagellum</location>
    </subcellularLocation>
</comment>
<comment type="miscellaneous">
    <text>Individual Salmonella serotypes usually alternate between the production of 2 antigenic forms of flagella, termed phase 1 and phase 2, each specified by separate structural genes.</text>
</comment>
<comment type="similarity">
    <text evidence="2">Belongs to the bacterial flagellin family.</text>
</comment>
<proteinExistence type="inferred from homology"/>
<sequence>MAQVINTNSLSLLTQNNLNKSQSSLSSAIERLSSGLRINSAKDDAAGQAIANRFTSNIKGLTQASRNANDGISIAQTTEGALNEINNNLQRVRELSVQATNGTNSDSDLKSIQDEIQQRLEEIDRVSNQTQFNGVKVLSQDNQMKIQVGANDGETITIDLQKIDVKSLGLDGFNVNGPKEATVGDLKSSFKNVTGYDTYAAGADKYRVDINSGAVVTDAVAPNKVYVNAANGQLTTDDAENNTAVDLFKTTKSTAGTAEAKAIAGAIKGGKEGDTFDYKGVTFTIDTKTGNDGNGKVSTTINGEKVTLTVADITGGAANVDAATLQSSKNVYTSVVNGQFTFDDKTKNESAKLSDLEANNAVKGESKITVNGAEYTANATGDKVTLAGKTMFIDKTASGVSTLINEDAAAAKKSTANPLASIDSALSKVDAVRSSLGAIQNRFDSAITNLGNTVTNLNSARSRIEDADYATEVSNMSKAQILQQAGTSVLAQANQVPQNVLSLLR</sequence>
<feature type="initiator methionine" description="Removed" evidence="1">
    <location>
        <position position="1"/>
    </location>
</feature>
<feature type="chain" id="PRO_0000182566" description="Flagellin">
    <location>
        <begin position="2"/>
        <end position="505"/>
    </location>
</feature>
<protein>
    <recommendedName>
        <fullName>Flagellin</fullName>
    </recommendedName>
    <alternativeName>
        <fullName>Phase 1-C flagellin</fullName>
    </alternativeName>
</protein>
<dbReference type="EMBL" id="U06225">
    <property type="protein sequence ID" value="AAA17866.1"/>
    <property type="molecule type" value="Unassigned_DNA"/>
</dbReference>
<dbReference type="EMBL" id="Z15066">
    <property type="protein sequence ID" value="CAA78775.1"/>
    <property type="molecule type" value="Genomic_DNA"/>
</dbReference>
<dbReference type="RefSeq" id="WP_048348807.1">
    <property type="nucleotide sequence ID" value="NZ_CABWXX010000084.1"/>
</dbReference>
<dbReference type="SMR" id="Q06970"/>
<dbReference type="GO" id="GO:0009288">
    <property type="term" value="C:bacterial-type flagellum"/>
    <property type="evidence" value="ECO:0007669"/>
    <property type="project" value="UniProtKB-SubCell"/>
</dbReference>
<dbReference type="GO" id="GO:0005576">
    <property type="term" value="C:extracellular region"/>
    <property type="evidence" value="ECO:0007669"/>
    <property type="project" value="UniProtKB-SubCell"/>
</dbReference>
<dbReference type="GO" id="GO:0005198">
    <property type="term" value="F:structural molecule activity"/>
    <property type="evidence" value="ECO:0007669"/>
    <property type="project" value="InterPro"/>
</dbReference>
<dbReference type="Gene3D" id="6.10.280.190">
    <property type="match status" value="1"/>
</dbReference>
<dbReference type="Gene3D" id="2.30.220.10">
    <property type="entry name" value="f41 fragment of flagellin, C-terminal domain"/>
    <property type="match status" value="1"/>
</dbReference>
<dbReference type="Gene3D" id="2.170.280.10">
    <property type="entry name" value="f41 fragment of flagellin, middle domain"/>
    <property type="match status" value="1"/>
</dbReference>
<dbReference type="Gene3D" id="1.20.1330.10">
    <property type="entry name" value="f41 fragment of flagellin, N-terminal domain"/>
    <property type="match status" value="1"/>
</dbReference>
<dbReference type="Gene3D" id="6.10.10.10">
    <property type="entry name" value="Flagellar export chaperone, C-terminal domain"/>
    <property type="match status" value="1"/>
</dbReference>
<dbReference type="InterPro" id="IPR001492">
    <property type="entry name" value="Flagellin"/>
</dbReference>
<dbReference type="InterPro" id="IPR046358">
    <property type="entry name" value="Flagellin_C"/>
</dbReference>
<dbReference type="InterPro" id="IPR042187">
    <property type="entry name" value="Flagellin_C_sub2"/>
</dbReference>
<dbReference type="InterPro" id="IPR001029">
    <property type="entry name" value="Flagellin_N"/>
</dbReference>
<dbReference type="PANTHER" id="PTHR42792">
    <property type="entry name" value="FLAGELLIN"/>
    <property type="match status" value="1"/>
</dbReference>
<dbReference type="PANTHER" id="PTHR42792:SF2">
    <property type="entry name" value="FLAGELLIN"/>
    <property type="match status" value="1"/>
</dbReference>
<dbReference type="Pfam" id="PF00700">
    <property type="entry name" value="Flagellin_C"/>
    <property type="match status" value="1"/>
</dbReference>
<dbReference type="Pfam" id="PF00669">
    <property type="entry name" value="Flagellin_N"/>
    <property type="match status" value="1"/>
</dbReference>
<dbReference type="Pfam" id="PF22370">
    <property type="entry name" value="FliC-like_3rd"/>
    <property type="match status" value="1"/>
</dbReference>
<dbReference type="PRINTS" id="PR00207">
    <property type="entry name" value="FLAGELLIN"/>
</dbReference>
<dbReference type="SUPFAM" id="SSF64518">
    <property type="entry name" value="Phase 1 flagellin"/>
    <property type="match status" value="1"/>
</dbReference>
<keyword id="KW-0975">Bacterial flagellum</keyword>
<keyword id="KW-0964">Secreted</keyword>
<name>FLIC_SALDE</name>
<gene>
    <name type="primary">fliC</name>
</gene>
<evidence type="ECO:0000250" key="1"/>
<evidence type="ECO:0000305" key="2"/>